<gene>
    <name evidence="2" type="primary">KDR</name>
    <name type="synonym">EK1</name>
    <name type="synonym">FLK-1</name>
</gene>
<evidence type="ECO:0000250" key="1"/>
<evidence type="ECO:0000250" key="2">
    <source>
        <dbReference type="UniProtKB" id="P35968"/>
    </source>
</evidence>
<evidence type="ECO:0000255" key="3"/>
<evidence type="ECO:0000255" key="4">
    <source>
        <dbReference type="PROSITE-ProRule" id="PRU00114"/>
    </source>
</evidence>
<evidence type="ECO:0000255" key="5">
    <source>
        <dbReference type="PROSITE-ProRule" id="PRU00159"/>
    </source>
</evidence>
<evidence type="ECO:0000255" key="6">
    <source>
        <dbReference type="PROSITE-ProRule" id="PRU10028"/>
    </source>
</evidence>
<evidence type="ECO:0000256" key="7">
    <source>
        <dbReference type="SAM" id="MobiDB-lite"/>
    </source>
</evidence>
<evidence type="ECO:0000305" key="8"/>
<dbReference type="EC" id="2.7.10.1" evidence="2"/>
<dbReference type="EMBL" id="X83288">
    <property type="protein sequence ID" value="CAA58268.1"/>
    <property type="molecule type" value="mRNA"/>
</dbReference>
<dbReference type="EMBL" id="S65205">
    <property type="protein sequence ID" value="AAB28127.1"/>
    <property type="molecule type" value="mRNA"/>
</dbReference>
<dbReference type="EMBL" id="S78345">
    <property type="protein sequence ID" value="AAB34594.1"/>
    <property type="molecule type" value="mRNA"/>
</dbReference>
<dbReference type="PIR" id="JC4953">
    <property type="entry name" value="S51656"/>
</dbReference>
<dbReference type="BMRB" id="P52583"/>
<dbReference type="SMR" id="P52583"/>
<dbReference type="DIP" id="DIP-450N"/>
<dbReference type="GlyCosmos" id="P52583">
    <property type="glycosylation" value="20 sites, No reported glycans"/>
</dbReference>
<dbReference type="BRENDA" id="2.7.10.1">
    <property type="organism ID" value="1673"/>
</dbReference>
<dbReference type="Proteomes" id="UP000694412">
    <property type="component" value="Unplaced"/>
</dbReference>
<dbReference type="GO" id="GO:0070161">
    <property type="term" value="C:anchoring junction"/>
    <property type="evidence" value="ECO:0007669"/>
    <property type="project" value="UniProtKB-SubCell"/>
</dbReference>
<dbReference type="GO" id="GO:0005769">
    <property type="term" value="C:early endosome"/>
    <property type="evidence" value="ECO:0007669"/>
    <property type="project" value="UniProtKB-SubCell"/>
</dbReference>
<dbReference type="GO" id="GO:0005783">
    <property type="term" value="C:endoplasmic reticulum"/>
    <property type="evidence" value="ECO:0000250"/>
    <property type="project" value="UniProtKB"/>
</dbReference>
<dbReference type="GO" id="GO:0005886">
    <property type="term" value="C:plasma membrane"/>
    <property type="evidence" value="ECO:0007669"/>
    <property type="project" value="UniProtKB-SubCell"/>
</dbReference>
<dbReference type="GO" id="GO:0043235">
    <property type="term" value="C:receptor complex"/>
    <property type="evidence" value="ECO:0007669"/>
    <property type="project" value="TreeGrafter"/>
</dbReference>
<dbReference type="GO" id="GO:0005524">
    <property type="term" value="F:ATP binding"/>
    <property type="evidence" value="ECO:0007669"/>
    <property type="project" value="UniProtKB-KW"/>
</dbReference>
<dbReference type="GO" id="GO:0019838">
    <property type="term" value="F:growth factor binding"/>
    <property type="evidence" value="ECO:0007669"/>
    <property type="project" value="InterPro"/>
</dbReference>
<dbReference type="GO" id="GO:0005021">
    <property type="term" value="F:vascular endothelial growth factor receptor activity"/>
    <property type="evidence" value="ECO:0007669"/>
    <property type="project" value="InterPro"/>
</dbReference>
<dbReference type="GO" id="GO:0001525">
    <property type="term" value="P:angiogenesis"/>
    <property type="evidence" value="ECO:0007669"/>
    <property type="project" value="UniProtKB-KW"/>
</dbReference>
<dbReference type="GO" id="GO:0016477">
    <property type="term" value="P:cell migration"/>
    <property type="evidence" value="ECO:0007669"/>
    <property type="project" value="TreeGrafter"/>
</dbReference>
<dbReference type="GO" id="GO:0035924">
    <property type="term" value="P:cellular response to vascular endothelial growth factor stimulus"/>
    <property type="evidence" value="ECO:0000250"/>
    <property type="project" value="UniProtKB"/>
</dbReference>
<dbReference type="GO" id="GO:0045446">
    <property type="term" value="P:endothelial cell differentiation"/>
    <property type="evidence" value="ECO:0007669"/>
    <property type="project" value="TreeGrafter"/>
</dbReference>
<dbReference type="GO" id="GO:0045766">
    <property type="term" value="P:positive regulation of angiogenesis"/>
    <property type="evidence" value="ECO:0007669"/>
    <property type="project" value="TreeGrafter"/>
</dbReference>
<dbReference type="GO" id="GO:0030335">
    <property type="term" value="P:positive regulation of cell migration"/>
    <property type="evidence" value="ECO:0007669"/>
    <property type="project" value="TreeGrafter"/>
</dbReference>
<dbReference type="GO" id="GO:0001934">
    <property type="term" value="P:positive regulation of protein phosphorylation"/>
    <property type="evidence" value="ECO:0000250"/>
    <property type="project" value="UniProtKB"/>
</dbReference>
<dbReference type="GO" id="GO:0046777">
    <property type="term" value="P:protein autophosphorylation"/>
    <property type="evidence" value="ECO:0000250"/>
    <property type="project" value="UniProtKB"/>
</dbReference>
<dbReference type="GO" id="GO:0043408">
    <property type="term" value="P:regulation of MAPK cascade"/>
    <property type="evidence" value="ECO:0007669"/>
    <property type="project" value="TreeGrafter"/>
</dbReference>
<dbReference type="GO" id="GO:0048010">
    <property type="term" value="P:vascular endothelial growth factor receptor signaling pathway"/>
    <property type="evidence" value="ECO:0000250"/>
    <property type="project" value="UniProtKB"/>
</dbReference>
<dbReference type="CDD" id="cd00096">
    <property type="entry name" value="Ig"/>
    <property type="match status" value="1"/>
</dbReference>
<dbReference type="CDD" id="cd05862">
    <property type="entry name" value="IgI_VEGFR"/>
    <property type="match status" value="1"/>
</dbReference>
<dbReference type="CDD" id="cd05864">
    <property type="entry name" value="IgI_VEGFR-2"/>
    <property type="match status" value="1"/>
</dbReference>
<dbReference type="CDD" id="cd05103">
    <property type="entry name" value="PTKc_VEGFR2"/>
    <property type="match status" value="1"/>
</dbReference>
<dbReference type="FunFam" id="1.10.510.10:FF:000077">
    <property type="entry name" value="Vascular endothelial growth factor receptor 2"/>
    <property type="match status" value="1"/>
</dbReference>
<dbReference type="FunFam" id="2.60.40.10:FF:000532">
    <property type="entry name" value="Vascular endothelial growth factor receptor 2"/>
    <property type="match status" value="1"/>
</dbReference>
<dbReference type="FunFam" id="2.60.40.10:FF:000596">
    <property type="entry name" value="Vascular endothelial growth factor receptor 2"/>
    <property type="match status" value="1"/>
</dbReference>
<dbReference type="FunFam" id="2.60.40.10:FF:000669">
    <property type="entry name" value="Vascular endothelial growth factor receptor 2"/>
    <property type="match status" value="1"/>
</dbReference>
<dbReference type="FunFam" id="2.60.40.10:FF:000767">
    <property type="entry name" value="Vascular endothelial growth factor receptor 2"/>
    <property type="match status" value="1"/>
</dbReference>
<dbReference type="FunFam" id="3.30.200.20:FF:000041">
    <property type="entry name" value="Vascular endothelial growth factor receptor 2"/>
    <property type="match status" value="1"/>
</dbReference>
<dbReference type="FunFam" id="2.60.40.10:FF:000143">
    <property type="entry name" value="Vascular endothelial growth factor receptor 3"/>
    <property type="match status" value="1"/>
</dbReference>
<dbReference type="FunFam" id="2.60.40.10:FF:000247">
    <property type="entry name" value="Vascular endothelial growth factor receptor 3"/>
    <property type="match status" value="1"/>
</dbReference>
<dbReference type="Gene3D" id="2.60.40.10">
    <property type="entry name" value="Immunoglobulins"/>
    <property type="match status" value="7"/>
</dbReference>
<dbReference type="Gene3D" id="3.30.200.20">
    <property type="entry name" value="Phosphorylase Kinase, domain 1"/>
    <property type="match status" value="1"/>
</dbReference>
<dbReference type="Gene3D" id="1.10.510.10">
    <property type="entry name" value="Transferase(Phosphotransferase) domain 1"/>
    <property type="match status" value="1"/>
</dbReference>
<dbReference type="InterPro" id="IPR007110">
    <property type="entry name" value="Ig-like_dom"/>
</dbReference>
<dbReference type="InterPro" id="IPR036179">
    <property type="entry name" value="Ig-like_dom_sf"/>
</dbReference>
<dbReference type="InterPro" id="IPR013783">
    <property type="entry name" value="Ig-like_fold"/>
</dbReference>
<dbReference type="InterPro" id="IPR013098">
    <property type="entry name" value="Ig_I-set"/>
</dbReference>
<dbReference type="InterPro" id="IPR003599">
    <property type="entry name" value="Ig_sub"/>
</dbReference>
<dbReference type="InterPro" id="IPR003598">
    <property type="entry name" value="Ig_sub2"/>
</dbReference>
<dbReference type="InterPro" id="IPR011009">
    <property type="entry name" value="Kinase-like_dom_sf"/>
</dbReference>
<dbReference type="InterPro" id="IPR000719">
    <property type="entry name" value="Prot_kinase_dom"/>
</dbReference>
<dbReference type="InterPro" id="IPR017441">
    <property type="entry name" value="Protein_kinase_ATP_BS"/>
</dbReference>
<dbReference type="InterPro" id="IPR050122">
    <property type="entry name" value="RTK"/>
</dbReference>
<dbReference type="InterPro" id="IPR001245">
    <property type="entry name" value="Ser-Thr/Tyr_kinase_cat_dom"/>
</dbReference>
<dbReference type="InterPro" id="IPR008266">
    <property type="entry name" value="Tyr_kinase_AS"/>
</dbReference>
<dbReference type="InterPro" id="IPR020635">
    <property type="entry name" value="Tyr_kinase_cat_dom"/>
</dbReference>
<dbReference type="InterPro" id="IPR001824">
    <property type="entry name" value="Tyr_kinase_rcpt_3_CS"/>
</dbReference>
<dbReference type="InterPro" id="IPR041348">
    <property type="entry name" value="VEGFR-2_TMD"/>
</dbReference>
<dbReference type="InterPro" id="IPR055229">
    <property type="entry name" value="VEGFR1-3_5th"/>
</dbReference>
<dbReference type="InterPro" id="IPR055238">
    <property type="entry name" value="VEGFR1-3_N_Ig-like"/>
</dbReference>
<dbReference type="InterPro" id="IPR009136">
    <property type="entry name" value="VEGFR2_rcpt"/>
</dbReference>
<dbReference type="PANTHER" id="PTHR24416">
    <property type="entry name" value="TYROSINE-PROTEIN KINASE RECEPTOR"/>
    <property type="match status" value="1"/>
</dbReference>
<dbReference type="PANTHER" id="PTHR24416:SF45">
    <property type="entry name" value="VASCULAR ENDOTHELIAL GROWTH FACTOR RECEPTOR 2"/>
    <property type="match status" value="1"/>
</dbReference>
<dbReference type="Pfam" id="PF07679">
    <property type="entry name" value="I-set"/>
    <property type="match status" value="2"/>
</dbReference>
<dbReference type="Pfam" id="PF13927">
    <property type="entry name" value="Ig_3"/>
    <property type="match status" value="1"/>
</dbReference>
<dbReference type="Pfam" id="PF22971">
    <property type="entry name" value="Ig_VEGFR-1-like_5th"/>
    <property type="match status" value="1"/>
</dbReference>
<dbReference type="Pfam" id="PF07714">
    <property type="entry name" value="PK_Tyr_Ser-Thr"/>
    <property type="match status" value="1"/>
</dbReference>
<dbReference type="Pfam" id="PF21339">
    <property type="entry name" value="VEGFR-1-like_Ig-like"/>
    <property type="match status" value="1"/>
</dbReference>
<dbReference type="Pfam" id="PF17988">
    <property type="entry name" value="VEGFR-2_TMD"/>
    <property type="match status" value="1"/>
</dbReference>
<dbReference type="Pfam" id="PF22854">
    <property type="entry name" value="VEGFR1-3_N_Ig-like"/>
    <property type="match status" value="1"/>
</dbReference>
<dbReference type="PIRSF" id="PIRSF000615">
    <property type="entry name" value="TyrPK_CSF1-R"/>
    <property type="match status" value="1"/>
</dbReference>
<dbReference type="PRINTS" id="PR01832">
    <property type="entry name" value="VEGFRECEPTOR"/>
</dbReference>
<dbReference type="PRINTS" id="PR01834">
    <property type="entry name" value="VEGFRECEPTR2"/>
</dbReference>
<dbReference type="SMART" id="SM00409">
    <property type="entry name" value="IG"/>
    <property type="match status" value="7"/>
</dbReference>
<dbReference type="SMART" id="SM00408">
    <property type="entry name" value="IGc2"/>
    <property type="match status" value="4"/>
</dbReference>
<dbReference type="SMART" id="SM00219">
    <property type="entry name" value="TyrKc"/>
    <property type="match status" value="1"/>
</dbReference>
<dbReference type="SUPFAM" id="SSF48726">
    <property type="entry name" value="Immunoglobulin"/>
    <property type="match status" value="7"/>
</dbReference>
<dbReference type="SUPFAM" id="SSF56112">
    <property type="entry name" value="Protein kinase-like (PK-like)"/>
    <property type="match status" value="1"/>
</dbReference>
<dbReference type="PROSITE" id="PS50835">
    <property type="entry name" value="IG_LIKE"/>
    <property type="match status" value="5"/>
</dbReference>
<dbReference type="PROSITE" id="PS00107">
    <property type="entry name" value="PROTEIN_KINASE_ATP"/>
    <property type="match status" value="1"/>
</dbReference>
<dbReference type="PROSITE" id="PS50011">
    <property type="entry name" value="PROTEIN_KINASE_DOM"/>
    <property type="match status" value="1"/>
</dbReference>
<dbReference type="PROSITE" id="PS00109">
    <property type="entry name" value="PROTEIN_KINASE_TYR"/>
    <property type="match status" value="1"/>
</dbReference>
<dbReference type="PROSITE" id="PS00240">
    <property type="entry name" value="RECEPTOR_TYR_KIN_III"/>
    <property type="match status" value="1"/>
</dbReference>
<proteinExistence type="evidence at protein level"/>
<keyword id="KW-0037">Angiogenesis</keyword>
<keyword id="KW-0067">ATP-binding</keyword>
<keyword id="KW-0965">Cell junction</keyword>
<keyword id="KW-1003">Cell membrane</keyword>
<keyword id="KW-0968">Cytoplasmic vesicle</keyword>
<keyword id="KW-0217">Developmental protein</keyword>
<keyword id="KW-0221">Differentiation</keyword>
<keyword id="KW-1015">Disulfide bond</keyword>
<keyword id="KW-0256">Endoplasmic reticulum</keyword>
<keyword id="KW-0967">Endosome</keyword>
<keyword id="KW-0325">Glycoprotein</keyword>
<keyword id="KW-0393">Immunoglobulin domain</keyword>
<keyword id="KW-0418">Kinase</keyword>
<keyword id="KW-0472">Membrane</keyword>
<keyword id="KW-0547">Nucleotide-binding</keyword>
<keyword id="KW-0597">Phosphoprotein</keyword>
<keyword id="KW-0675">Receptor</keyword>
<keyword id="KW-1185">Reference proteome</keyword>
<keyword id="KW-0677">Repeat</keyword>
<keyword id="KW-0732">Signal</keyword>
<keyword id="KW-0808">Transferase</keyword>
<keyword id="KW-0812">Transmembrane</keyword>
<keyword id="KW-1133">Transmembrane helix</keyword>
<keyword id="KW-0829">Tyrosine-protein kinase</keyword>
<name>VGFR2_COTJA</name>
<comment type="function">
    <text evidence="1">Tyrosine-protein kinase that acts as a cell-surface receptor for VEGFA, VEGFC and/or VEGFD and plays an essential role in the regulation of angiogenesis and vascular development. Promotes proliferation, survival, migration and differentiation of endothelial cells. Promotes reorganization of the actin cytoskeleton. Binding of vascular growth factors leads to the activation of several signaling cascades. Activation of PLCG1 leads to the production of the cellular signaling molecules diacylglycerol and inositol 1,4,5-trisphosphate and the activation of protein kinase C. Mediates activation of MAPK1/ERK2, MAPK3/ERK1 and the MAP kinase signaling pathway, as well as of the AKT1 signaling pathway. Mediates phosphorylation of PIK3R1, the regulatory subunit of phosphatidylinositol 3-kinase, reorganization of the actin cytoskeleton and activation of PTK2/FAK1. Required for VEGFA-mediated induction of NOS2 and NOS3, leading to the production of the signaling molecule nitric oxide (NO) by endothelial cells (By similarity).</text>
</comment>
<comment type="catalytic activity">
    <reaction evidence="6">
        <text>L-tyrosyl-[protein] + ATP = O-phospho-L-tyrosyl-[protein] + ADP + H(+)</text>
        <dbReference type="Rhea" id="RHEA:10596"/>
        <dbReference type="Rhea" id="RHEA-COMP:10136"/>
        <dbReference type="Rhea" id="RHEA-COMP:20101"/>
        <dbReference type="ChEBI" id="CHEBI:15378"/>
        <dbReference type="ChEBI" id="CHEBI:30616"/>
        <dbReference type="ChEBI" id="CHEBI:46858"/>
        <dbReference type="ChEBI" id="CHEBI:61978"/>
        <dbReference type="ChEBI" id="CHEBI:456216"/>
        <dbReference type="EC" id="2.7.10.1"/>
    </reaction>
</comment>
<comment type="activity regulation">
    <text evidence="1">Present in an inactive conformation in the absence of bound ligand. Binding of VEGFA, VEGFC or VEGFD leads to dimerization and activation by autophosphorylation on tyrosine residues (By similarity).</text>
</comment>
<comment type="subcellular location">
    <subcellularLocation>
        <location evidence="1">Cell membrane</location>
        <topology evidence="1">Single-pass type I membrane protein</topology>
    </subcellularLocation>
    <subcellularLocation>
        <location evidence="1">Cytoplasmic vesicle</location>
    </subcellularLocation>
    <subcellularLocation>
        <location evidence="1">Early endosome</location>
    </subcellularLocation>
    <subcellularLocation>
        <location evidence="1">Cell junction</location>
    </subcellularLocation>
    <subcellularLocation>
        <location evidence="2">Endoplasmic reticulum</location>
    </subcellularLocation>
    <text evidence="1">Detected on caveolae-enriched lipid rafts at the cell surface. Is recycled from the plasma membrane to endosomes and back again. Phosphorylation triggered by VEGFA binding promotes internalization and subsequent degradation. Localized with RAP1A at cell-cell junctions (By similarity).</text>
</comment>
<comment type="tissue specificity">
    <text>In all endothelial tissues during onset of vascularization. In later development, present in lung, heart, intestine and skin.</text>
</comment>
<comment type="developmental stage">
    <text>Expressed in whole mesoderm at onset of gastrulation. From day 2, confined to endothelial tissues and expression continues to be widespread throughout vascularization until 9 dpc where it becomes restricted to specific regions such as the spinal cord and heart valves.</text>
</comment>
<comment type="induction">
    <text>In vitro, it is induced by basic fibroblast growth factor (bFGF), uniquely in the first 24 hours of cell culture.</text>
</comment>
<comment type="domain">
    <text evidence="1">The second and third Ig-like C2-type (immunoglobulin-like) domains are sufficient for VEGF binding.</text>
</comment>
<comment type="PTM">
    <text evidence="1">Autophosphorylated on tyrosine residues upon ligand binding. Autophosphorylation occurs in trans, i.e. one subunit of the dimeric receptor phosphorylates tyrosine residues on the other subunit (By similarity).</text>
</comment>
<comment type="similarity">
    <text evidence="5">Belongs to the protein kinase superfamily. Tyr protein kinase family. CSF-1/PDGF receptor subfamily.</text>
</comment>
<feature type="signal peptide" evidence="3">
    <location>
        <begin position="1"/>
        <end position="20"/>
    </location>
</feature>
<feature type="chain" id="PRO_0000016774" description="Vascular endothelial growth factor receptor 2">
    <location>
        <begin position="21"/>
        <end position="1348"/>
    </location>
</feature>
<feature type="topological domain" description="Extracellular" evidence="3">
    <location>
        <begin position="21"/>
        <end position="756"/>
    </location>
</feature>
<feature type="transmembrane region" description="Helical" evidence="3">
    <location>
        <begin position="757"/>
        <end position="777"/>
    </location>
</feature>
<feature type="topological domain" description="Cytoplasmic" evidence="3">
    <location>
        <begin position="778"/>
        <end position="1348"/>
    </location>
</feature>
<feature type="domain" description="Ig-like C2-type 1">
    <location>
        <begin position="43"/>
        <end position="106"/>
    </location>
</feature>
<feature type="domain" description="Ig-like C2-type 2">
    <location>
        <begin position="138"/>
        <end position="202"/>
    </location>
</feature>
<feature type="domain" description="Ig-like C2-type 3">
    <location>
        <begin position="220"/>
        <end position="312"/>
    </location>
</feature>
<feature type="domain" description="Ig-like C2-type 4">
    <location>
        <begin position="320"/>
        <end position="405"/>
    </location>
</feature>
<feature type="domain" description="Ig-like C2-type 5">
    <location>
        <begin position="412"/>
        <end position="534"/>
    </location>
</feature>
<feature type="domain" description="Ig-like C2-type 6">
    <location>
        <begin position="540"/>
        <end position="651"/>
    </location>
</feature>
<feature type="domain" description="Ig-like C2-type 7">
    <location>
        <begin position="658"/>
        <end position="744"/>
    </location>
</feature>
<feature type="domain" description="Protein kinase" evidence="5">
    <location>
        <begin position="825"/>
        <end position="1155"/>
    </location>
</feature>
<feature type="region of interest" description="Disordered" evidence="7">
    <location>
        <begin position="958"/>
        <end position="983"/>
    </location>
</feature>
<feature type="region of interest" description="Disordered" evidence="7">
    <location>
        <begin position="1280"/>
        <end position="1302"/>
    </location>
</feature>
<feature type="compositionally biased region" description="Low complexity" evidence="7">
    <location>
        <begin position="958"/>
        <end position="967"/>
    </location>
</feature>
<feature type="active site" description="Proton acceptor" evidence="5 6">
    <location>
        <position position="1021"/>
    </location>
</feature>
<feature type="binding site" evidence="5">
    <location>
        <begin position="831"/>
        <end position="839"/>
    </location>
    <ligand>
        <name>ATP</name>
        <dbReference type="ChEBI" id="CHEBI:30616"/>
    </ligand>
</feature>
<feature type="binding site" evidence="5">
    <location>
        <position position="859"/>
    </location>
    <ligand>
        <name>ATP</name>
        <dbReference type="ChEBI" id="CHEBI:30616"/>
    </ligand>
</feature>
<feature type="modified residue" description="Phosphotyrosine; by autocatalysis" evidence="1">
    <location>
        <position position="1047"/>
    </location>
</feature>
<feature type="modified residue" description="Phosphotyrosine; by autocatalysis" evidence="1">
    <location>
        <position position="1052"/>
    </location>
</feature>
<feature type="modified residue" description="Phosphotyrosine; by autocatalysis" evidence="1">
    <location>
        <position position="1168"/>
    </location>
</feature>
<feature type="modified residue" description="Phosphotyrosine; by autocatalysis" evidence="1">
    <location>
        <position position="1207"/>
    </location>
</feature>
<feature type="glycosylation site" description="N-linked (GlcNAc...) asparagine" evidence="3">
    <location>
        <position position="43"/>
    </location>
</feature>
<feature type="glycosylation site" description="N-linked (GlcNAc...) asparagine" evidence="3">
    <location>
        <position position="47"/>
    </location>
</feature>
<feature type="glycosylation site" description="N-linked (GlcNAc...) asparagine" evidence="3">
    <location>
        <position position="63"/>
    </location>
</feature>
<feature type="glycosylation site" description="N-linked (GlcNAc...) asparagine" evidence="3">
    <location>
        <position position="93"/>
    </location>
</feature>
<feature type="glycosylation site" description="N-linked (GlcNAc...) asparagine" evidence="3">
    <location>
        <position position="138"/>
    </location>
</feature>
<feature type="glycosylation site" description="N-linked (GlcNAc...) asparagine" evidence="3">
    <location>
        <position position="153"/>
    </location>
</feature>
<feature type="glycosylation site" description="N-linked (GlcNAc...) asparagine" evidence="3">
    <location>
        <position position="201"/>
    </location>
</feature>
<feature type="glycosylation site" description="N-linked (GlcNAc...) asparagine" evidence="3">
    <location>
        <position position="240"/>
    </location>
</feature>
<feature type="glycosylation site" description="N-linked (GlcNAc...) asparagine" evidence="3">
    <location>
        <position position="290"/>
    </location>
</feature>
<feature type="glycosylation site" description="N-linked (GlcNAc...) asparagine" evidence="3">
    <location>
        <position position="310"/>
    </location>
</feature>
<feature type="glycosylation site" description="N-linked (GlcNAc...) asparagine" evidence="3">
    <location>
        <position position="365"/>
    </location>
</feature>
<feature type="glycosylation site" description="N-linked (GlcNAc...) asparagine" evidence="3">
    <location>
        <position position="386"/>
    </location>
</feature>
<feature type="glycosylation site" description="N-linked (GlcNAc...) asparagine" evidence="3">
    <location>
        <position position="513"/>
    </location>
</feature>
<feature type="glycosylation site" description="N-linked (GlcNAc...) asparagine" evidence="3">
    <location>
        <position position="556"/>
    </location>
</feature>
<feature type="glycosylation site" description="N-linked (GlcNAc...) asparagine" evidence="3">
    <location>
        <position position="603"/>
    </location>
</feature>
<feature type="glycosylation site" description="N-linked (GlcNAc...) asparagine" evidence="3">
    <location>
        <position position="613"/>
    </location>
</feature>
<feature type="glycosylation site" description="N-linked (GlcNAc...) asparagine" evidence="3">
    <location>
        <position position="622"/>
    </location>
</feature>
<feature type="glycosylation site" description="N-linked (GlcNAc...) asparagine" evidence="3">
    <location>
        <position position="666"/>
    </location>
</feature>
<feature type="glycosylation site" description="N-linked (GlcNAc...) asparagine" evidence="3">
    <location>
        <position position="688"/>
    </location>
</feature>
<feature type="glycosylation site" description="N-linked (GlcNAc...) asparagine" evidence="3">
    <location>
        <position position="710"/>
    </location>
</feature>
<feature type="disulfide bond" evidence="4">
    <location>
        <begin position="50"/>
        <end position="100"/>
    </location>
</feature>
<feature type="disulfide bond" evidence="4">
    <location>
        <begin position="145"/>
        <end position="195"/>
    </location>
</feature>
<feature type="disulfide bond" evidence="4">
    <location>
        <begin position="241"/>
        <end position="299"/>
    </location>
</feature>
<feature type="disulfide bond" evidence="4">
    <location>
        <begin position="436"/>
        <end position="520"/>
    </location>
</feature>
<feature type="disulfide bond" evidence="4">
    <location>
        <begin position="561"/>
        <end position="633"/>
    </location>
</feature>
<feature type="disulfide bond" evidence="4">
    <location>
        <begin position="679"/>
        <end position="728"/>
    </location>
</feature>
<feature type="sequence conflict" description="In Ref. 3; AAB34594." evidence="8" ref="3">
    <original>A</original>
    <variation>S</variation>
    <location>
        <position position="865"/>
    </location>
</feature>
<reference key="1">
    <citation type="journal article" date="1996" name="Gene">
        <title>Molecular cloning of Quek 1 and 2, two quail vascular endothelial growth factor (VEGF) receptor-like molecules.</title>
        <authorList>
            <person name="Eichmann A."/>
            <person name="Marcelle C."/>
            <person name="Breant C."/>
            <person name="Le Douarin N.M."/>
        </authorList>
    </citation>
    <scope>NUCLEOTIDE SEQUENCE [MRNA]</scope>
    <source>
        <tissue>Embryo</tissue>
    </source>
</reference>
<reference key="2">
    <citation type="journal article" date="1993" name="Mech. Dev.">
        <title>Two molecules related to the VEGF receptor are expressed in early endothelial cells during avian embryonic development.</title>
        <authorList>
            <person name="Eichmann A."/>
            <person name="Marcelle C."/>
            <person name="Breant C."/>
            <person name="Le Douarin N.M."/>
        </authorList>
    </citation>
    <scope>NUCLEOTIDE SEQUENCE [MRNA] OF 910-1348</scope>
    <source>
        <tissue>Spinal cord</tissue>
    </source>
</reference>
<reference key="3">
    <citation type="journal article" date="1995" name="Dev. Biol.">
        <title>Vascular endothelial growth factor (VEGF) and VEGF receptor 2 (flk-1) are expressed during vasculogenesis and vascular differentiation in the quail embryo.</title>
        <authorList>
            <person name="Flamme I."/>
            <person name="Breier G."/>
            <person name="Risau W."/>
        </authorList>
    </citation>
    <scope>NUCLEOTIDE SEQUENCE [MRNA] OF 764-880</scope>
    <scope>CHARACTERIZATION</scope>
    <source>
        <tissue>Embryo</tissue>
    </source>
</reference>
<reference key="4">
    <citation type="journal article" date="1992" name="Oncogene">
        <title>Molecular cloning of a family of protein kinase genes expressed in the avian embryo.</title>
        <authorList>
            <person name="Marcelle C."/>
            <person name="Eichmann A."/>
        </authorList>
    </citation>
    <scope>NUCLEOTIDE SEQUENCE [MRNA] OF 1023-1079</scope>
</reference>
<sequence>MELGPLRVLTVLLCLAPVFAGLFISMDQPTLSIQKSVLTITTNDTLNITCSGQRAVYWSWPNNQSSVEKRLAVTGCSEGPFCKTLTLLRVIGNDTGDYRCLYGDSQAATTIYVYVQDYRSPFVTSVGDQLGIVYITKNKTVVVPCLGTVSNLNVSLHAKYPEKVFVPDGKSISWDNKKGFTIPSHLINYAGMVFCEAKIDNESYQSVIYIVAVVGYRIYDLTMNPHYQVELAVGEKLVLNCTVRTELNVGIDFRWDYPSIKERRATIRDLKTTAGEIKTFVSTLTIESVNLSDKGRYTCAASSGRMNMKNSSYFIIHESPFIHLEKMENVVEMKLGDTVSIPVKFKGYPPPEAKWYKNGKVINANHTVKLGYALVITEATEKDAGNYTVVLTNPTNKMQKRHTFTLLVNVPPQIGENALMAPVDSYKYGSTQALTCTIYAVPPPAAVLWYWQLEEECTFSPQKVRLGANPYACRKWKVISERKGGNQVEIKQRVVTIAGKTKTVSTLVIQAANVSALYRCMATNRAGSSERVISFHVTRGLEINLQPRSQLTEKDNTSLQCTADKFTFEKLSWYKLSTHVSQTPFGGLPMPVCKNLDALQKLNATVSNVNGENVTLELILRNISLQDGGDYVCIAQDKKAKTQHCLVKHLTVQEPLHPRLVGNLENQTTNIGETIEVLCTVNGVPPPNITWFKNSETLFEDSGIVLKDGNKTLTIRRVRKEDGGLYTCLACNILGCKKAEAFFSVQGAEEKTNLELIILVGTAVIAMFFWLLLVIILRTVKRANGGDMKTGYLSIIMDPDEVPIDEHCERLPYDASKWEFPRDRLKLGKPLGRGAFGQVIEADAFGIDKTATCRTVAVKMLKEGATHSEHRALMSELKILIHIGHHLNVVNLLGACTKPGGPLMVIVEYCKFGNLSAYLRSKRSEFIPYKMKSARFRQGKENYTGDISTDLKQRLDSITSSQSSTSSGFVEERSLSDVEEEDAGSEDLCKNPLTMEDLICYSFQVARGMEFLASRKCIHRDLAARNILLSDNNVVKICDFGLARDIYKDPDYVRKGDARLPLKWMAPETIFDRVYTIQSDVWSFGVLLWEIFSLGASPYPGVKIDEEFCRRLKEGTRMRAPDYTTPEMYQTMLDCWHGDPKQRPTFSELVEHLGNLLQANVRQDGKDYVVLPLSVSLNMEEDSGLSLPTSPASCKEEEEVCDPKFHYDNTAGISQYRQGSKRKSRPVSVKTFEDIPLVTTVKVVQEENQTDSGMVLASEELKTLEEQDKQVKIPFSTLAPSKSNESVMSEASNQTSGYQSGYHSDDMDNMVCSSEDTELLCAQEASPTLPRCAWPGIYSPAPVASLPL</sequence>
<accession>P52583</accession>
<organism>
    <name type="scientific">Coturnix japonica</name>
    <name type="common">Japanese quail</name>
    <name type="synonym">Coturnix coturnix japonica</name>
    <dbReference type="NCBI Taxonomy" id="93934"/>
    <lineage>
        <taxon>Eukaryota</taxon>
        <taxon>Metazoa</taxon>
        <taxon>Chordata</taxon>
        <taxon>Craniata</taxon>
        <taxon>Vertebrata</taxon>
        <taxon>Euteleostomi</taxon>
        <taxon>Archelosauria</taxon>
        <taxon>Archosauria</taxon>
        <taxon>Dinosauria</taxon>
        <taxon>Saurischia</taxon>
        <taxon>Theropoda</taxon>
        <taxon>Coelurosauria</taxon>
        <taxon>Aves</taxon>
        <taxon>Neognathae</taxon>
        <taxon>Galloanserae</taxon>
        <taxon>Galliformes</taxon>
        <taxon>Phasianidae</taxon>
        <taxon>Perdicinae</taxon>
        <taxon>Coturnix</taxon>
    </lineage>
</organism>
<protein>
    <recommendedName>
        <fullName evidence="2">Vascular endothelial growth factor receptor 2</fullName>
        <shortName>VEGFR-2</shortName>
        <ecNumber evidence="2">2.7.10.1</ecNumber>
    </recommendedName>
    <alternativeName>
        <fullName>Endothelial kinase receptor EK1</fullName>
    </alternativeName>
    <alternativeName>
        <fullName>Quek 1</fullName>
        <shortName>Quek1</shortName>
    </alternativeName>
</protein>